<accession>A0A067MTM1</accession>
<organism>
    <name type="scientific">Botryobasidium botryosum (strain FD-172 SS1)</name>
    <dbReference type="NCBI Taxonomy" id="930990"/>
    <lineage>
        <taxon>Eukaryota</taxon>
        <taxon>Fungi</taxon>
        <taxon>Dikarya</taxon>
        <taxon>Basidiomycota</taxon>
        <taxon>Agaricomycotina</taxon>
        <taxon>Agaricomycetes</taxon>
        <taxon>Cantharellales</taxon>
        <taxon>Botryobasidiaceae</taxon>
        <taxon>Botryobasidium</taxon>
    </lineage>
</organism>
<evidence type="ECO:0000255" key="1"/>
<evidence type="ECO:0000255" key="2">
    <source>
        <dbReference type="PROSITE-ProRule" id="PRU00258"/>
    </source>
</evidence>
<evidence type="ECO:0000255" key="3">
    <source>
        <dbReference type="PROSITE-ProRule" id="PRU01348"/>
    </source>
</evidence>
<evidence type="ECO:0000256" key="4">
    <source>
        <dbReference type="SAM" id="MobiDB-lite"/>
    </source>
</evidence>
<evidence type="ECO:0000269" key="5">
    <source>
    </source>
</evidence>
<evidence type="ECO:0000303" key="6">
    <source>
    </source>
</evidence>
<evidence type="ECO:0000305" key="7"/>
<evidence type="ECO:0000305" key="8">
    <source>
    </source>
</evidence>
<comment type="function">
    <text evidence="5">Hybrid PKS-NRPS synthetase that mediates the biosynthesis of the toxin tenuazonic acid (TeA), an inhibitor of protein biosynthesis on ribosomes by suppressing the release of new protein. TAS1 alone is sufficient for TeA synthesis via the condensation of isoleucine (Ile) with acetoacetyl-CoA by the N-terminal NRPS module and subsequent cyclization conducted by the C-terminal KS domain.</text>
</comment>
<comment type="catalytic activity">
    <reaction evidence="5">
        <text>acetoacetyl-CoA + L-isoleucine + ATP = tenuazonic acid + AMP + diphosphate + CoA + 2 H(+)</text>
        <dbReference type="Rhea" id="RHEA:52800"/>
        <dbReference type="ChEBI" id="CHEBI:15378"/>
        <dbReference type="ChEBI" id="CHEBI:30616"/>
        <dbReference type="ChEBI" id="CHEBI:33019"/>
        <dbReference type="ChEBI" id="CHEBI:57286"/>
        <dbReference type="ChEBI" id="CHEBI:57287"/>
        <dbReference type="ChEBI" id="CHEBI:58045"/>
        <dbReference type="ChEBI" id="CHEBI:136842"/>
        <dbReference type="ChEBI" id="CHEBI:456215"/>
        <dbReference type="EC" id="6.3.2.50"/>
    </reaction>
    <physiologicalReaction direction="left-to-right" evidence="5">
        <dbReference type="Rhea" id="RHEA:52801"/>
    </physiologicalReaction>
</comment>
<comment type="cofactor">
    <cofactor evidence="2">
        <name>pantetheine 4'-phosphate</name>
        <dbReference type="ChEBI" id="CHEBI:47942"/>
    </cofactor>
</comment>
<comment type="domain">
    <text evidence="5">TAS1 has the following domain architecture: C-A-T-T-KS. The N-terminal NRPS module contains the condensation (C), adenylation (A), and thiolation (T) domains and catalyzes the formation of the amide linkage between the isoleucine (Ile) with acetoacetyl-CoA. The ketosynthase (KS) domain and this domain in the PKS portion of TAS1 is indispensable for TAS1 activity by conducting the final cyclization step for tenuazonic acid release.</text>
</comment>
<comment type="similarity">
    <text evidence="7">In the N-terminal section; belongs to the NRP synthetase family.</text>
</comment>
<protein>
    <recommendedName>
        <fullName evidence="6">Hybrid PKS-NRPS synthetase TAS1</fullName>
        <ecNumber evidence="5">6.3.2.50</ecNumber>
    </recommendedName>
    <alternativeName>
        <fullName evidence="6">Tenuazonic acid synthetase 1</fullName>
    </alternativeName>
</protein>
<name>TAS1_BOTB1</name>
<sequence>MALFHNLEPKRSIDFMSGARTSSGSPSVSYSNSLPSPHTALVAPLSKMQRALWFDYISAPESTMYNLTLKFKLDQESEEYDGSISAILRAIDFLTKRHGMLRSTFHNSSNPSQPPYFAEIDSRHAHPTTHIVSSSEQLKRAALRGFDLSVDGPIRWIVFTNVKSNELYAVAHHIAVDGSSMSQLSKEIITLLTHYKHQSAEMLAPTTTSNYGLYCLAQDSYTHQESYKKALHFWSSQIAGTLPMEWNSSMLRTNPARLTQTTSQLDHRVCSTWLSLTPQELKAWGNLYKTSWFRVATALIGLLCAKHSKHKFRTDQSLLVAFGARPEQSNDVLGHFANGMPIKIPISMLERSESAQLGGFVKEVSKNISAAKREEMFPYVDLVQHARRNGLNSEHRVSVTFSPKLASDICSLYPVEGVCDLFFCFLEEEDGGAILGLIYDPQLFTPDAIQTLREDFIQLIRFSLSPEDATQSLASFPGLSARQQFNGPPLHDVVAIDQCRVHALVQQQATLRPEQLALYSEELQMYMTYEELEMATNQAAHCLRACGSCKGEVVALHLSHGFDMIIWIYAAFKSGAAFTVVDPSYPPTRKSAIFELSKAKICVYDSKTAPSLQWAIDENLCSVFITTAGSDNTPIDRFPTHPLTDEGSTLDDLAYIIFTSGSTGLPKGVMVAHRQLSHFVSAARDCTPVGPSVRALQVLSFSFDAAVLEYAATLVYGGTLCFAEHRDALVGDYLADVVDANKINHLTATPSILATLPAAREMPTLRSICVGGEHCPEGVLNTWRQRVQLIHAYGPTETTVAVTLHRLPREIDPEEVADGVSPSSIMGKPLPNVKIYVCDTSRRILKNGKIGELHISGPQVSRGYIDREELNAEKFWINEHGERTYASGDRGRILPDGTVLLYGRINNREIKVRGYRLELGEIEKMITKADTQVRTVSVQANVTGDGLLAFVTPRTVDTEALRLALAKYAPRYMIPSEILAIDALPCTVNDKVDHARVQRDMADLRARASKLGTASLLTPNDTPLQSPSPPLSDISQLDLTDDLEWAAAKARIAEIWRQVLAAPGPILGGVKFFEAGGNSLLVLKLKAEIEGAFGVKVSFSDLFQNSTVDSQVGLVQSRRGSSGSPRTVRSHARPQRKAKTPPRQARPETPESDYDQLPDLRDDVQQSICSIWMEVLGYHGKLDAKSNFFELGGTSLQIPILHKALLREFPASNVSLVKVFQSATLAAQVELLGRFTESPRFSPRPAITPSAAVVSRSPRRPSSPAREQYAIVGMSGRFPGASTIPEFWDLLVHQRDGIQAIGGLEDAPLGPNEVLVQRRGLIKDVEHFDHEFWKMPKNYALRMDPQKRHFLNVALEALDDAGIELDPQGQNDVGIFVGSSENTFREYCATRSEDAFEMRHSHHMDTAVSATAAYYLNTFGPNVTLNTACSSALVALKLGMDALATGQTKVVCVGGCTIEYPLQGYITEPGKVLSTTGEVRPFDAASDGSVPGDAVCAVIIKRATDALADGDQIYAFVDGAAVGSDGHLDKPGITVPSPRGQAETIKRAMQQAHARPEQIAHVEVHGSGTRMGDALELEGLSIAYDQHLGRQAGQRPVSVGSNKGNFGNCEAASGLVSIIKAALSISNGVVPPLRKLETVGDHVDFMRLNLTPAREPLRLSRHDKVGVTSLGLGGSTAHVVLSAPPGNARRTKEWKQIRELHPTLLPCGPAN</sequence>
<proteinExistence type="evidence at protein level"/>
<dbReference type="EC" id="6.3.2.50" evidence="5"/>
<dbReference type="EMBL" id="KL198020">
    <property type="protein sequence ID" value="KDQ18939.1"/>
    <property type="molecule type" value="Genomic_DNA"/>
</dbReference>
<dbReference type="SMR" id="A0A067MTM1"/>
<dbReference type="STRING" id="930990.A0A067MTM1"/>
<dbReference type="HOGENOM" id="CLU_003656_0_0_1"/>
<dbReference type="InParanoid" id="A0A067MTM1"/>
<dbReference type="OrthoDB" id="408177at2759"/>
<dbReference type="Proteomes" id="UP000027195">
    <property type="component" value="Unassembled WGS sequence"/>
</dbReference>
<dbReference type="GO" id="GO:0005829">
    <property type="term" value="C:cytosol"/>
    <property type="evidence" value="ECO:0007669"/>
    <property type="project" value="TreeGrafter"/>
</dbReference>
<dbReference type="GO" id="GO:0009366">
    <property type="term" value="C:enterobactin synthetase complex"/>
    <property type="evidence" value="ECO:0007669"/>
    <property type="project" value="TreeGrafter"/>
</dbReference>
<dbReference type="GO" id="GO:0047527">
    <property type="term" value="F:2,3-dihydroxybenzoate-serine ligase activity"/>
    <property type="evidence" value="ECO:0007669"/>
    <property type="project" value="TreeGrafter"/>
</dbReference>
<dbReference type="GO" id="GO:0004315">
    <property type="term" value="F:3-oxoacyl-[acyl-carrier-protein] synthase activity"/>
    <property type="evidence" value="ECO:0007669"/>
    <property type="project" value="InterPro"/>
</dbReference>
<dbReference type="GO" id="GO:0031177">
    <property type="term" value="F:phosphopantetheine binding"/>
    <property type="evidence" value="ECO:0007669"/>
    <property type="project" value="InterPro"/>
</dbReference>
<dbReference type="GO" id="GO:0043041">
    <property type="term" value="P:amino acid activation for nonribosomal peptide biosynthetic process"/>
    <property type="evidence" value="ECO:0007669"/>
    <property type="project" value="TreeGrafter"/>
</dbReference>
<dbReference type="GO" id="GO:0009239">
    <property type="term" value="P:enterobactin biosynthetic process"/>
    <property type="evidence" value="ECO:0007669"/>
    <property type="project" value="TreeGrafter"/>
</dbReference>
<dbReference type="GO" id="GO:0006633">
    <property type="term" value="P:fatty acid biosynthetic process"/>
    <property type="evidence" value="ECO:0007669"/>
    <property type="project" value="InterPro"/>
</dbReference>
<dbReference type="CDD" id="cd00833">
    <property type="entry name" value="PKS"/>
    <property type="match status" value="1"/>
</dbReference>
<dbReference type="Gene3D" id="3.30.300.30">
    <property type="match status" value="1"/>
</dbReference>
<dbReference type="Gene3D" id="3.40.47.10">
    <property type="match status" value="1"/>
</dbReference>
<dbReference type="Gene3D" id="1.10.1200.10">
    <property type="entry name" value="ACP-like"/>
    <property type="match status" value="2"/>
</dbReference>
<dbReference type="Gene3D" id="3.30.559.10">
    <property type="entry name" value="Chloramphenicol acetyltransferase-like domain"/>
    <property type="match status" value="1"/>
</dbReference>
<dbReference type="Gene3D" id="3.40.50.12780">
    <property type="entry name" value="N-terminal domain of ligase-like"/>
    <property type="match status" value="1"/>
</dbReference>
<dbReference type="Gene3D" id="3.30.559.30">
    <property type="entry name" value="Nonribosomal peptide synthetase, condensation domain"/>
    <property type="match status" value="1"/>
</dbReference>
<dbReference type="InterPro" id="IPR010071">
    <property type="entry name" value="AA_adenyl_dom"/>
</dbReference>
<dbReference type="InterPro" id="IPR036736">
    <property type="entry name" value="ACP-like_sf"/>
</dbReference>
<dbReference type="InterPro" id="IPR045851">
    <property type="entry name" value="AMP-bd_C_sf"/>
</dbReference>
<dbReference type="InterPro" id="IPR020845">
    <property type="entry name" value="AMP-binding_CS"/>
</dbReference>
<dbReference type="InterPro" id="IPR000873">
    <property type="entry name" value="AMP-dep_synth/lig_dom"/>
</dbReference>
<dbReference type="InterPro" id="IPR042099">
    <property type="entry name" value="ANL_N_sf"/>
</dbReference>
<dbReference type="InterPro" id="IPR023213">
    <property type="entry name" value="CAT-like_dom_sf"/>
</dbReference>
<dbReference type="InterPro" id="IPR001242">
    <property type="entry name" value="Condensatn"/>
</dbReference>
<dbReference type="InterPro" id="IPR018201">
    <property type="entry name" value="Ketoacyl_synth_AS"/>
</dbReference>
<dbReference type="InterPro" id="IPR014031">
    <property type="entry name" value="Ketoacyl_synth_C"/>
</dbReference>
<dbReference type="InterPro" id="IPR014030">
    <property type="entry name" value="Ketoacyl_synth_N"/>
</dbReference>
<dbReference type="InterPro" id="IPR020841">
    <property type="entry name" value="PKS_Beta-ketoAc_synthase_dom"/>
</dbReference>
<dbReference type="InterPro" id="IPR020806">
    <property type="entry name" value="PKS_PP-bd"/>
</dbReference>
<dbReference type="InterPro" id="IPR009081">
    <property type="entry name" value="PP-bd_ACP"/>
</dbReference>
<dbReference type="InterPro" id="IPR016039">
    <property type="entry name" value="Thiolase-like"/>
</dbReference>
<dbReference type="NCBIfam" id="TIGR01733">
    <property type="entry name" value="AA-adenyl-dom"/>
    <property type="match status" value="1"/>
</dbReference>
<dbReference type="PANTHER" id="PTHR45527:SF1">
    <property type="entry name" value="FATTY ACID SYNTHASE"/>
    <property type="match status" value="1"/>
</dbReference>
<dbReference type="PANTHER" id="PTHR45527">
    <property type="entry name" value="NONRIBOSOMAL PEPTIDE SYNTHETASE"/>
    <property type="match status" value="1"/>
</dbReference>
<dbReference type="Pfam" id="PF00501">
    <property type="entry name" value="AMP-binding"/>
    <property type="match status" value="1"/>
</dbReference>
<dbReference type="Pfam" id="PF00668">
    <property type="entry name" value="Condensation"/>
    <property type="match status" value="1"/>
</dbReference>
<dbReference type="Pfam" id="PF00109">
    <property type="entry name" value="ketoacyl-synt"/>
    <property type="match status" value="1"/>
</dbReference>
<dbReference type="Pfam" id="PF02801">
    <property type="entry name" value="Ketoacyl-synt_C"/>
    <property type="match status" value="1"/>
</dbReference>
<dbReference type="Pfam" id="PF00550">
    <property type="entry name" value="PP-binding"/>
    <property type="match status" value="2"/>
</dbReference>
<dbReference type="SMART" id="SM00825">
    <property type="entry name" value="PKS_KS"/>
    <property type="match status" value="1"/>
</dbReference>
<dbReference type="SMART" id="SM00823">
    <property type="entry name" value="PKS_PP"/>
    <property type="match status" value="2"/>
</dbReference>
<dbReference type="SUPFAM" id="SSF56801">
    <property type="entry name" value="Acetyl-CoA synthetase-like"/>
    <property type="match status" value="1"/>
</dbReference>
<dbReference type="SUPFAM" id="SSF47336">
    <property type="entry name" value="ACP-like"/>
    <property type="match status" value="2"/>
</dbReference>
<dbReference type="SUPFAM" id="SSF52777">
    <property type="entry name" value="CoA-dependent acyltransferases"/>
    <property type="match status" value="2"/>
</dbReference>
<dbReference type="SUPFAM" id="SSF53901">
    <property type="entry name" value="Thiolase-like"/>
    <property type="match status" value="1"/>
</dbReference>
<dbReference type="PROSITE" id="PS00455">
    <property type="entry name" value="AMP_BINDING"/>
    <property type="match status" value="1"/>
</dbReference>
<dbReference type="PROSITE" id="PS50075">
    <property type="entry name" value="CARRIER"/>
    <property type="match status" value="2"/>
</dbReference>
<dbReference type="PROSITE" id="PS00606">
    <property type="entry name" value="KS3_1"/>
    <property type="match status" value="1"/>
</dbReference>
<dbReference type="PROSITE" id="PS52004">
    <property type="entry name" value="KS3_2"/>
    <property type="match status" value="1"/>
</dbReference>
<gene>
    <name evidence="6" type="primary">TAS1</name>
    <name type="ORF">BOTBODRAFT_28419</name>
</gene>
<feature type="chain" id="PRO_0000460257" description="Hybrid PKS-NRPS synthetase TAS1">
    <location>
        <begin position="1"/>
        <end position="1711"/>
    </location>
</feature>
<feature type="domain" description="Carrier 1" evidence="2 8">
    <location>
        <begin position="1043"/>
        <end position="1119"/>
    </location>
</feature>
<feature type="domain" description="Carrier 2" evidence="2 8">
    <location>
        <begin position="1159"/>
        <end position="1236"/>
    </location>
</feature>
<feature type="domain" description="Ketosynthase family 3 (KS3)" evidence="3 8">
    <location>
        <begin position="1266"/>
        <end position="1683"/>
    </location>
</feature>
<feature type="region of interest" description="Condensation (C) domain" evidence="1 8">
    <location>
        <begin position="43"/>
        <end position="397"/>
    </location>
</feature>
<feature type="region of interest" description="Adenylation (A) domain" evidence="1 8">
    <location>
        <begin position="506"/>
        <end position="907"/>
    </location>
</feature>
<feature type="region of interest" description="Disordered" evidence="4">
    <location>
        <begin position="1114"/>
        <end position="1159"/>
    </location>
</feature>
<feature type="compositionally biased region" description="Polar residues" evidence="4">
    <location>
        <begin position="1114"/>
        <end position="1127"/>
    </location>
</feature>
<feature type="compositionally biased region" description="Basic residues" evidence="4">
    <location>
        <begin position="1128"/>
        <end position="1140"/>
    </location>
</feature>
<feature type="active site" description="For beta-ketoacyl synthase activity" evidence="3">
    <location>
        <position position="1429"/>
    </location>
</feature>
<feature type="active site" description="For beta-ketoacyl synthase activity" evidence="3">
    <location>
        <position position="1565"/>
    </location>
</feature>
<feature type="active site" description="For beta-ketoacyl synthase activity" evidence="3">
    <location>
        <position position="1608"/>
    </location>
</feature>
<feature type="modified residue" description="O-(pantetheine 4'-phosphoryl)serine" evidence="2">
    <location>
        <position position="1079"/>
    </location>
</feature>
<feature type="modified residue" description="O-(pantetheine 4'-phosphoryl)serine" evidence="2">
    <location>
        <position position="1195"/>
    </location>
</feature>
<reference key="1">
    <citation type="journal article" date="2014" name="Proc. Natl. Acad. Sci. U.S.A.">
        <title>Extensive sampling of basidiomycete genomes demonstrates inadequacy of the white-rot/brown-rot paradigm for wood decay fungi.</title>
        <authorList>
            <person name="Riley R."/>
            <person name="Salamov A.A."/>
            <person name="Brown D.W."/>
            <person name="Nagy L.G."/>
            <person name="Floudas D."/>
            <person name="Held B.W."/>
            <person name="Levasseur A."/>
            <person name="Lombard V."/>
            <person name="Morin E."/>
            <person name="Otillar R."/>
            <person name="Lindquist E.A."/>
            <person name="Sun H."/>
            <person name="LaButti K.M."/>
            <person name="Schmutz J."/>
            <person name="Jabbour D."/>
            <person name="Luo H."/>
            <person name="Baker S.E."/>
            <person name="Pisabarro A.G."/>
            <person name="Walton J.D."/>
            <person name="Blanchette R.A."/>
            <person name="Henrissat B."/>
            <person name="Martin F."/>
            <person name="Cullen D."/>
            <person name="Hibbett D.S."/>
            <person name="Grigoriev I.V."/>
        </authorList>
    </citation>
    <scope>NUCLEOTIDE SEQUENCE [LARGE SCALE GENOMIC DNA]</scope>
    <source>
        <strain>FD-172 SS1</strain>
    </source>
</reference>
<reference key="2">
    <citation type="journal article" date="2023" name="ACS Chem. Biol.">
        <title>Fungal NRPS-PKS Hybrid Enzymes Biosynthesize New gamma-Lactam Compounds, Taslactams A-D, Analogous to Actinomycete Proteasome Inhibitors.</title>
        <authorList>
            <person name="Motoyama T."/>
            <person name="Nogawa T."/>
            <person name="Shimizu T."/>
            <person name="Kawatani M."/>
            <person name="Kashiwa T."/>
            <person name="Yun C.S."/>
            <person name="Hashizume D."/>
            <person name="Osada H."/>
        </authorList>
    </citation>
    <scope>FUNCTION</scope>
    <scope>DOMAIN</scope>
    <scope>CATALYTIC ACTIVITY</scope>
</reference>
<keyword id="KW-0436">Ligase</keyword>
<keyword id="KW-0511">Multifunctional enzyme</keyword>
<keyword id="KW-0596">Phosphopantetheine</keyword>
<keyword id="KW-0597">Phosphoprotein</keyword>
<keyword id="KW-1185">Reference proteome</keyword>
<keyword id="KW-0808">Transferase</keyword>
<keyword id="KW-0843">Virulence</keyword>